<feature type="chain" id="PRO_0000162589" description="Period circadian protein">
    <location>
        <begin position="1" status="less than"/>
        <end position="125" status="greater than"/>
    </location>
</feature>
<feature type="repeat" description="1">
    <location>
        <begin position="30"/>
        <end position="31"/>
    </location>
</feature>
<feature type="repeat" description="2">
    <location>
        <begin position="33"/>
        <end position="34"/>
    </location>
</feature>
<feature type="repeat" description="3">
    <location>
        <begin position="35"/>
        <end position="36"/>
    </location>
</feature>
<feature type="repeat" description="4; approximate">
    <location>
        <begin position="37"/>
        <end position="38"/>
    </location>
</feature>
<feature type="repeat" description="5">
    <location>
        <begin position="39"/>
        <end position="40"/>
    </location>
</feature>
<feature type="repeat" description="6; approximate">
    <location>
        <begin position="41"/>
        <end position="42"/>
    </location>
</feature>
<feature type="repeat" description="7">
    <location>
        <begin position="43"/>
        <end position="44"/>
    </location>
</feature>
<feature type="repeat" description="8">
    <location>
        <begin position="45"/>
        <end position="46"/>
    </location>
</feature>
<feature type="repeat" description="9">
    <location>
        <begin position="47"/>
        <end position="48"/>
    </location>
</feature>
<feature type="repeat" description="10">
    <location>
        <begin position="49"/>
        <end position="50"/>
    </location>
</feature>
<feature type="repeat" description="11">
    <location>
        <begin position="51"/>
        <end position="52"/>
    </location>
</feature>
<feature type="repeat" description="12">
    <location>
        <begin position="53"/>
        <end position="54"/>
    </location>
</feature>
<feature type="repeat" description="13">
    <location>
        <begin position="55"/>
        <end position="56"/>
    </location>
</feature>
<feature type="repeat" description="14">
    <location>
        <begin position="57"/>
        <end position="58"/>
    </location>
</feature>
<feature type="repeat" description="15">
    <location>
        <begin position="59"/>
        <end position="60"/>
    </location>
</feature>
<feature type="repeat" description="16">
    <location>
        <begin position="61"/>
        <end position="62"/>
    </location>
</feature>
<feature type="repeat" description="17">
    <location>
        <begin position="63"/>
        <end position="64"/>
    </location>
</feature>
<feature type="repeat" description="18">
    <location>
        <begin position="65"/>
        <end position="66"/>
    </location>
</feature>
<feature type="repeat" description="19">
    <location>
        <begin position="67"/>
        <end position="68"/>
    </location>
</feature>
<feature type="repeat" description="20">
    <location>
        <begin position="69"/>
        <end position="70"/>
    </location>
</feature>
<feature type="repeat" description="21">
    <location>
        <begin position="71"/>
        <end position="72"/>
    </location>
</feature>
<feature type="repeat" description="22">
    <location>
        <begin position="73"/>
        <end position="74"/>
    </location>
</feature>
<feature type="repeat" description="23">
    <location>
        <begin position="75"/>
        <end position="76"/>
    </location>
</feature>
<feature type="repeat" description="24; approximate">
    <location>
        <begin position="77"/>
        <end position="78"/>
    </location>
</feature>
<feature type="repeat" description="25">
    <location>
        <begin position="79"/>
        <end position="80"/>
    </location>
</feature>
<feature type="repeat" description="26">
    <location>
        <begin position="81"/>
        <end position="82"/>
    </location>
</feature>
<feature type="repeat" description="27">
    <location>
        <begin position="83"/>
        <end position="84"/>
    </location>
</feature>
<feature type="repeat" description="28">
    <location>
        <begin position="85"/>
        <end position="86"/>
    </location>
</feature>
<feature type="region of interest" description="Disordered" evidence="2">
    <location>
        <begin position="1"/>
        <end position="125"/>
    </location>
</feature>
<feature type="region of interest" description="28 X 2 AA approximate tandem repeats of G-[TA]">
    <location>
        <begin position="30"/>
        <end position="86"/>
    </location>
</feature>
<feature type="compositionally biased region" description="Gly residues" evidence="2">
    <location>
        <begin position="30"/>
        <end position="84"/>
    </location>
</feature>
<feature type="compositionally biased region" description="Low complexity" evidence="2">
    <location>
        <begin position="85"/>
        <end position="112"/>
    </location>
</feature>
<feature type="compositionally biased region" description="Polar residues" evidence="2">
    <location>
        <begin position="116"/>
        <end position="125"/>
    </location>
</feature>
<feature type="non-terminal residue">
    <location>
        <position position="1"/>
    </location>
</feature>
<feature type="non-terminal residue">
    <location>
        <position position="125"/>
    </location>
</feature>
<protein>
    <recommendedName>
        <fullName>Period circadian protein</fullName>
    </recommendedName>
</protein>
<gene>
    <name type="primary">per</name>
</gene>
<dbReference type="EMBL" id="L06335">
    <property type="protein sequence ID" value="AAA28758.1"/>
    <property type="molecule type" value="Genomic_DNA"/>
</dbReference>
<dbReference type="eggNOG" id="KOG3753">
    <property type="taxonomic scope" value="Eukaryota"/>
</dbReference>
<dbReference type="GO" id="GO:0005634">
    <property type="term" value="C:nucleus"/>
    <property type="evidence" value="ECO:0007669"/>
    <property type="project" value="UniProtKB-SubCell"/>
</dbReference>
<dbReference type="GO" id="GO:0048471">
    <property type="term" value="C:perinuclear region of cytoplasm"/>
    <property type="evidence" value="ECO:0007669"/>
    <property type="project" value="UniProtKB-SubCell"/>
</dbReference>
<dbReference type="GO" id="GO:0048511">
    <property type="term" value="P:rhythmic process"/>
    <property type="evidence" value="ECO:0007669"/>
    <property type="project" value="UniProtKB-KW"/>
</dbReference>
<name>PER_DROAN</name>
<proteinExistence type="inferred from homology"/>
<comment type="function">
    <text evidence="1">Essential for biological clock functions. Determines the period length of circadian and ultradian rhythms; an increase in PER dosage leads to shortened circadian rhythms and a decrease leads to lengthened circadian rhythms. Essential for the circadian rhythmicity of locomotor activity, eclosion behavior, and for the rhythmic component of the male courtship song that originates in the thoracic nervous system. The biological cycle depends on the rhythmic formation and nuclear localization of the TIM-PER complex. Light induces the degradation of TIM, which promotes elimination of PER. Nuclear activity of the heterodimer coordinatively regulates PER and TIM transcription through a negative feedback loop. Behaves as a negative element in circadian transcriptional loop. Does not appear to bind DNA, suggesting indirect transcriptional inhibition (By similarity).</text>
</comment>
<comment type="subunit">
    <text evidence="1">Forms a heterodimer with timeless (TIM); the complex then translocates into the nucleus.</text>
</comment>
<comment type="subcellular location">
    <subcellularLocation>
        <location evidence="1">Nucleus</location>
    </subcellularLocation>
    <subcellularLocation>
        <location evidence="1">Cytoplasm</location>
        <location evidence="1">Perinuclear region</location>
    </subcellularLocation>
    <text evidence="1">Nuclear at specific periods of the day. First accumulates in the perinuclear region about one hour before translocation into the nucleus. Interaction with Tim is required for nuclear localization (By similarity).</text>
</comment>
<comment type="domain">
    <text evidence="1">The run of Gly-Thr is implicated in the maintenance of circadian period at different temperatures. Deletion of the repeat leads to a shortening of the courtship song cycle period, and thus could be important for determining features of species-specific mating behavior (By similarity).</text>
</comment>
<comment type="PTM">
    <text evidence="1">Phosphorylated with a circadian rhythmicity, probably by the double-time protein (dbt). Phosphorylation could be implicated in the stability of per monomer and in the formation of heterodimer per-tim (By similarity).</text>
</comment>
<evidence type="ECO:0000250" key="1"/>
<evidence type="ECO:0000256" key="2">
    <source>
        <dbReference type="SAM" id="MobiDB-lite"/>
    </source>
</evidence>
<reference key="1">
    <citation type="journal article" date="1993" name="Mol. Biol. Evol.">
        <title>Molecular evolution of a repetitive region within the per gene of Drosophila.</title>
        <authorList>
            <person name="Peixoto A.A."/>
            <person name="Campesan S."/>
            <person name="Costa R.H."/>
            <person name="Kyriacou C.P."/>
        </authorList>
    </citation>
    <scope>NUCLEOTIDE SEQUENCE [GENOMIC DNA]</scope>
</reference>
<sequence length="125" mass="11117">EGSGGSGSSGNFTTGSNVHMSSVTNTSNAGTGGTGTNTGTNTGTGTGTGTGTGTGTGTGTGTGTGTGTGTGTGTGTGKGAGAGTGTATNETAGPGTTTTTTTRSTTTAATAASPPVTLTESLLNK</sequence>
<accession>Q03293</accession>
<organism>
    <name type="scientific">Drosophila ananassae</name>
    <name type="common">Fruit fly</name>
    <dbReference type="NCBI Taxonomy" id="7217"/>
    <lineage>
        <taxon>Eukaryota</taxon>
        <taxon>Metazoa</taxon>
        <taxon>Ecdysozoa</taxon>
        <taxon>Arthropoda</taxon>
        <taxon>Hexapoda</taxon>
        <taxon>Insecta</taxon>
        <taxon>Pterygota</taxon>
        <taxon>Neoptera</taxon>
        <taxon>Endopterygota</taxon>
        <taxon>Diptera</taxon>
        <taxon>Brachycera</taxon>
        <taxon>Muscomorpha</taxon>
        <taxon>Ephydroidea</taxon>
        <taxon>Drosophilidae</taxon>
        <taxon>Drosophila</taxon>
        <taxon>Sophophora</taxon>
    </lineage>
</organism>
<keyword id="KW-0090">Biological rhythms</keyword>
<keyword id="KW-0963">Cytoplasm</keyword>
<keyword id="KW-0539">Nucleus</keyword>
<keyword id="KW-0597">Phosphoprotein</keyword>
<keyword id="KW-0677">Repeat</keyword>